<organism>
    <name type="scientific">Yersinia pseudotuberculosis serotype IB (strain PB1/+)</name>
    <dbReference type="NCBI Taxonomy" id="502801"/>
    <lineage>
        <taxon>Bacteria</taxon>
        <taxon>Pseudomonadati</taxon>
        <taxon>Pseudomonadota</taxon>
        <taxon>Gammaproteobacteria</taxon>
        <taxon>Enterobacterales</taxon>
        <taxon>Yersiniaceae</taxon>
        <taxon>Yersinia</taxon>
    </lineage>
</organism>
<proteinExistence type="inferred from homology"/>
<gene>
    <name evidence="1" type="primary">purT</name>
    <name type="ordered locus">YPTS_1775</name>
</gene>
<reference key="1">
    <citation type="submission" date="2008-04" db="EMBL/GenBank/DDBJ databases">
        <title>Complete sequence of Yersinia pseudotuberculosis PB1/+.</title>
        <authorList>
            <person name="Copeland A."/>
            <person name="Lucas S."/>
            <person name="Lapidus A."/>
            <person name="Glavina del Rio T."/>
            <person name="Dalin E."/>
            <person name="Tice H."/>
            <person name="Bruce D."/>
            <person name="Goodwin L."/>
            <person name="Pitluck S."/>
            <person name="Munk A.C."/>
            <person name="Brettin T."/>
            <person name="Detter J.C."/>
            <person name="Han C."/>
            <person name="Tapia R."/>
            <person name="Schmutz J."/>
            <person name="Larimer F."/>
            <person name="Land M."/>
            <person name="Hauser L."/>
            <person name="Challacombe J.F."/>
            <person name="Green L."/>
            <person name="Lindler L.E."/>
            <person name="Nikolich M.P."/>
            <person name="Richardson P."/>
        </authorList>
    </citation>
    <scope>NUCLEOTIDE SEQUENCE [LARGE SCALE GENOMIC DNA]</scope>
    <source>
        <strain>PB1/+</strain>
    </source>
</reference>
<dbReference type="EC" id="6.3.1.21" evidence="1"/>
<dbReference type="EMBL" id="CP001048">
    <property type="protein sequence ID" value="ACC88742.1"/>
    <property type="molecule type" value="Genomic_DNA"/>
</dbReference>
<dbReference type="RefSeq" id="WP_011192155.1">
    <property type="nucleotide sequence ID" value="NZ_CP009780.1"/>
</dbReference>
<dbReference type="SMR" id="B2K0H3"/>
<dbReference type="KEGG" id="ypb:YPTS_1775"/>
<dbReference type="PATRIC" id="fig|502801.10.peg.1153"/>
<dbReference type="UniPathway" id="UPA00074">
    <property type="reaction ID" value="UER00127"/>
</dbReference>
<dbReference type="GO" id="GO:0005829">
    <property type="term" value="C:cytosol"/>
    <property type="evidence" value="ECO:0007669"/>
    <property type="project" value="TreeGrafter"/>
</dbReference>
<dbReference type="GO" id="GO:0005524">
    <property type="term" value="F:ATP binding"/>
    <property type="evidence" value="ECO:0007669"/>
    <property type="project" value="UniProtKB-UniRule"/>
</dbReference>
<dbReference type="GO" id="GO:0000287">
    <property type="term" value="F:magnesium ion binding"/>
    <property type="evidence" value="ECO:0007669"/>
    <property type="project" value="InterPro"/>
</dbReference>
<dbReference type="GO" id="GO:0043815">
    <property type="term" value="F:phosphoribosylglycinamide formyltransferase 2 activity"/>
    <property type="evidence" value="ECO:0007669"/>
    <property type="project" value="UniProtKB-UniRule"/>
</dbReference>
<dbReference type="GO" id="GO:0004644">
    <property type="term" value="F:phosphoribosylglycinamide formyltransferase activity"/>
    <property type="evidence" value="ECO:0007669"/>
    <property type="project" value="InterPro"/>
</dbReference>
<dbReference type="GO" id="GO:0006189">
    <property type="term" value="P:'de novo' IMP biosynthetic process"/>
    <property type="evidence" value="ECO:0007669"/>
    <property type="project" value="UniProtKB-UniRule"/>
</dbReference>
<dbReference type="FunFam" id="3.30.1490.20:FF:000013">
    <property type="entry name" value="Formate-dependent phosphoribosylglycinamide formyltransferase"/>
    <property type="match status" value="1"/>
</dbReference>
<dbReference type="FunFam" id="3.30.470.20:FF:000027">
    <property type="entry name" value="Formate-dependent phosphoribosylglycinamide formyltransferase"/>
    <property type="match status" value="1"/>
</dbReference>
<dbReference type="FunFam" id="3.40.50.20:FF:000007">
    <property type="entry name" value="Formate-dependent phosphoribosylglycinamide formyltransferase"/>
    <property type="match status" value="1"/>
</dbReference>
<dbReference type="Gene3D" id="3.40.50.20">
    <property type="match status" value="1"/>
</dbReference>
<dbReference type="Gene3D" id="3.30.1490.20">
    <property type="entry name" value="ATP-grasp fold, A domain"/>
    <property type="match status" value="1"/>
</dbReference>
<dbReference type="Gene3D" id="3.30.470.20">
    <property type="entry name" value="ATP-grasp fold, B domain"/>
    <property type="match status" value="1"/>
</dbReference>
<dbReference type="HAMAP" id="MF_01643">
    <property type="entry name" value="PurT"/>
    <property type="match status" value="1"/>
</dbReference>
<dbReference type="InterPro" id="IPR011761">
    <property type="entry name" value="ATP-grasp"/>
</dbReference>
<dbReference type="InterPro" id="IPR003135">
    <property type="entry name" value="ATP-grasp_carboxylate-amine"/>
</dbReference>
<dbReference type="InterPro" id="IPR013815">
    <property type="entry name" value="ATP_grasp_subdomain_1"/>
</dbReference>
<dbReference type="InterPro" id="IPR016185">
    <property type="entry name" value="PreATP-grasp_dom_sf"/>
</dbReference>
<dbReference type="InterPro" id="IPR005862">
    <property type="entry name" value="PurT"/>
</dbReference>
<dbReference type="InterPro" id="IPR054350">
    <property type="entry name" value="PurT/PurK_preATP-grasp"/>
</dbReference>
<dbReference type="InterPro" id="IPR048740">
    <property type="entry name" value="PurT_C"/>
</dbReference>
<dbReference type="InterPro" id="IPR011054">
    <property type="entry name" value="Rudment_hybrid_motif"/>
</dbReference>
<dbReference type="NCBIfam" id="NF006766">
    <property type="entry name" value="PRK09288.1"/>
    <property type="match status" value="1"/>
</dbReference>
<dbReference type="NCBIfam" id="TIGR01142">
    <property type="entry name" value="purT"/>
    <property type="match status" value="1"/>
</dbReference>
<dbReference type="PANTHER" id="PTHR43055">
    <property type="entry name" value="FORMATE-DEPENDENT PHOSPHORIBOSYLGLYCINAMIDE FORMYLTRANSFERASE"/>
    <property type="match status" value="1"/>
</dbReference>
<dbReference type="PANTHER" id="PTHR43055:SF1">
    <property type="entry name" value="FORMATE-DEPENDENT PHOSPHORIBOSYLGLYCINAMIDE FORMYLTRANSFERASE"/>
    <property type="match status" value="1"/>
</dbReference>
<dbReference type="Pfam" id="PF02222">
    <property type="entry name" value="ATP-grasp"/>
    <property type="match status" value="1"/>
</dbReference>
<dbReference type="Pfam" id="PF21244">
    <property type="entry name" value="PurT_C"/>
    <property type="match status" value="1"/>
</dbReference>
<dbReference type="Pfam" id="PF22660">
    <property type="entry name" value="RS_preATP-grasp-like"/>
    <property type="match status" value="1"/>
</dbReference>
<dbReference type="SUPFAM" id="SSF56059">
    <property type="entry name" value="Glutathione synthetase ATP-binding domain-like"/>
    <property type="match status" value="1"/>
</dbReference>
<dbReference type="SUPFAM" id="SSF52440">
    <property type="entry name" value="PreATP-grasp domain"/>
    <property type="match status" value="1"/>
</dbReference>
<dbReference type="SUPFAM" id="SSF51246">
    <property type="entry name" value="Rudiment single hybrid motif"/>
    <property type="match status" value="1"/>
</dbReference>
<dbReference type="PROSITE" id="PS50975">
    <property type="entry name" value="ATP_GRASP"/>
    <property type="match status" value="1"/>
</dbReference>
<accession>B2K0H3</accession>
<sequence>MLTIGTALRPGATRVMLLGAGELGKEVAIECQRLGLEVIAVDRYADAPAMHVAHRSHVINMLDGAALKQLVAQEKPHYIVPEIEAIATDMLVELEKMGQHVVPCAEATRLTMNREGIRRLAAETLQLPTSSYRFADTDSAFFQAVRDIGYPCIVKPVMSSSGKGQSLIRSEEHLQAAWEYAQQGGRAGSGRVIIEGLVHFDFEITLLTIRAVDGIHFCAPIGHRQEDGDYRESWQPQAMSDIALQRAKEISAQVVTALGGFGLFGVELFVCGDDVIFSEVSPRPHDTGMVTLISQNMSEFALHVRAFLGLPIGTIRQYGAAASAVILPELTSQNITYRGLETALIGDTQIRLFGKPEIAGQRRLGVALAVADNIETAIEVAKKAAGNIEVSGE</sequence>
<evidence type="ECO:0000255" key="1">
    <source>
        <dbReference type="HAMAP-Rule" id="MF_01643"/>
    </source>
</evidence>
<feature type="chain" id="PRO_1000186904" description="Formate-dependent phosphoribosylglycinamide formyltransferase">
    <location>
        <begin position="1"/>
        <end position="393"/>
    </location>
</feature>
<feature type="domain" description="ATP-grasp" evidence="1">
    <location>
        <begin position="119"/>
        <end position="308"/>
    </location>
</feature>
<feature type="binding site" evidence="1">
    <location>
        <begin position="22"/>
        <end position="23"/>
    </location>
    <ligand>
        <name>N(1)-(5-phospho-beta-D-ribosyl)glycinamide</name>
        <dbReference type="ChEBI" id="CHEBI:143788"/>
    </ligand>
</feature>
<feature type="binding site" evidence="1">
    <location>
        <position position="82"/>
    </location>
    <ligand>
        <name>N(1)-(5-phospho-beta-D-ribosyl)glycinamide</name>
        <dbReference type="ChEBI" id="CHEBI:143788"/>
    </ligand>
</feature>
<feature type="binding site" evidence="1">
    <location>
        <position position="114"/>
    </location>
    <ligand>
        <name>ATP</name>
        <dbReference type="ChEBI" id="CHEBI:30616"/>
    </ligand>
</feature>
<feature type="binding site" evidence="1">
    <location>
        <position position="155"/>
    </location>
    <ligand>
        <name>ATP</name>
        <dbReference type="ChEBI" id="CHEBI:30616"/>
    </ligand>
</feature>
<feature type="binding site" evidence="1">
    <location>
        <begin position="160"/>
        <end position="165"/>
    </location>
    <ligand>
        <name>ATP</name>
        <dbReference type="ChEBI" id="CHEBI:30616"/>
    </ligand>
</feature>
<feature type="binding site" evidence="1">
    <location>
        <begin position="195"/>
        <end position="198"/>
    </location>
    <ligand>
        <name>ATP</name>
        <dbReference type="ChEBI" id="CHEBI:30616"/>
    </ligand>
</feature>
<feature type="binding site" evidence="1">
    <location>
        <position position="203"/>
    </location>
    <ligand>
        <name>ATP</name>
        <dbReference type="ChEBI" id="CHEBI:30616"/>
    </ligand>
</feature>
<feature type="binding site" evidence="1">
    <location>
        <position position="267"/>
    </location>
    <ligand>
        <name>Mg(2+)</name>
        <dbReference type="ChEBI" id="CHEBI:18420"/>
    </ligand>
</feature>
<feature type="binding site" evidence="1">
    <location>
        <position position="279"/>
    </location>
    <ligand>
        <name>Mg(2+)</name>
        <dbReference type="ChEBI" id="CHEBI:18420"/>
    </ligand>
</feature>
<feature type="binding site" evidence="1">
    <location>
        <position position="286"/>
    </location>
    <ligand>
        <name>N(1)-(5-phospho-beta-D-ribosyl)glycinamide</name>
        <dbReference type="ChEBI" id="CHEBI:143788"/>
    </ligand>
</feature>
<feature type="binding site" evidence="1">
    <location>
        <position position="355"/>
    </location>
    <ligand>
        <name>N(1)-(5-phospho-beta-D-ribosyl)glycinamide</name>
        <dbReference type="ChEBI" id="CHEBI:143788"/>
    </ligand>
</feature>
<feature type="binding site" evidence="1">
    <location>
        <begin position="362"/>
        <end position="363"/>
    </location>
    <ligand>
        <name>N(1)-(5-phospho-beta-D-ribosyl)glycinamide</name>
        <dbReference type="ChEBI" id="CHEBI:143788"/>
    </ligand>
</feature>
<comment type="function">
    <text evidence="1">Involved in the de novo purine biosynthesis. Catalyzes the transfer of formate to 5-phospho-ribosyl-glycinamide (GAR), producing 5-phospho-ribosyl-N-formylglycinamide (FGAR). Formate is provided by PurU via hydrolysis of 10-formyl-tetrahydrofolate.</text>
</comment>
<comment type="catalytic activity">
    <reaction evidence="1">
        <text>N(1)-(5-phospho-beta-D-ribosyl)glycinamide + formate + ATP = N(2)-formyl-N(1)-(5-phospho-beta-D-ribosyl)glycinamide + ADP + phosphate + H(+)</text>
        <dbReference type="Rhea" id="RHEA:24829"/>
        <dbReference type="ChEBI" id="CHEBI:15378"/>
        <dbReference type="ChEBI" id="CHEBI:15740"/>
        <dbReference type="ChEBI" id="CHEBI:30616"/>
        <dbReference type="ChEBI" id="CHEBI:43474"/>
        <dbReference type="ChEBI" id="CHEBI:143788"/>
        <dbReference type="ChEBI" id="CHEBI:147286"/>
        <dbReference type="ChEBI" id="CHEBI:456216"/>
        <dbReference type="EC" id="6.3.1.21"/>
    </reaction>
    <physiologicalReaction direction="left-to-right" evidence="1">
        <dbReference type="Rhea" id="RHEA:24830"/>
    </physiologicalReaction>
</comment>
<comment type="pathway">
    <text evidence="1">Purine metabolism; IMP biosynthesis via de novo pathway; N(2)-formyl-N(1)-(5-phospho-D-ribosyl)glycinamide from N(1)-(5-phospho-D-ribosyl)glycinamide (formate route): step 1/1.</text>
</comment>
<comment type="subunit">
    <text evidence="1">Homodimer.</text>
</comment>
<comment type="similarity">
    <text evidence="1">Belongs to the PurK/PurT family.</text>
</comment>
<name>PURT_YERPB</name>
<keyword id="KW-0067">ATP-binding</keyword>
<keyword id="KW-0436">Ligase</keyword>
<keyword id="KW-0460">Magnesium</keyword>
<keyword id="KW-0479">Metal-binding</keyword>
<keyword id="KW-0547">Nucleotide-binding</keyword>
<keyword id="KW-0658">Purine biosynthesis</keyword>
<protein>
    <recommendedName>
        <fullName evidence="1">Formate-dependent phosphoribosylglycinamide formyltransferase</fullName>
        <ecNumber evidence="1">6.3.1.21</ecNumber>
    </recommendedName>
    <alternativeName>
        <fullName evidence="1">5'-phosphoribosylglycinamide transformylase 2</fullName>
    </alternativeName>
    <alternativeName>
        <fullName evidence="1">Formate-dependent GAR transformylase</fullName>
    </alternativeName>
    <alternativeName>
        <fullName evidence="1">GAR transformylase 2</fullName>
        <shortName evidence="1">GART 2</shortName>
    </alternativeName>
    <alternativeName>
        <fullName evidence="1">Non-folate glycinamide ribonucleotide transformylase</fullName>
    </alternativeName>
    <alternativeName>
        <fullName evidence="1">Phosphoribosylglycinamide formyltransferase 2</fullName>
    </alternativeName>
</protein>